<proteinExistence type="inferred from homology"/>
<gene>
    <name evidence="1" type="primary">glnD</name>
    <name type="ordered locus">PA14_17040</name>
</gene>
<reference key="1">
    <citation type="journal article" date="2006" name="Genome Biol.">
        <title>Genomic analysis reveals that Pseudomonas aeruginosa virulence is combinatorial.</title>
        <authorList>
            <person name="Lee D.G."/>
            <person name="Urbach J.M."/>
            <person name="Wu G."/>
            <person name="Liberati N.T."/>
            <person name="Feinbaum R.L."/>
            <person name="Miyata S."/>
            <person name="Diggins L.T."/>
            <person name="He J."/>
            <person name="Saucier M."/>
            <person name="Deziel E."/>
            <person name="Friedman L."/>
            <person name="Li L."/>
            <person name="Grills G."/>
            <person name="Montgomery K."/>
            <person name="Kucherlapati R."/>
            <person name="Rahme L.G."/>
            <person name="Ausubel F.M."/>
        </authorList>
    </citation>
    <scope>NUCLEOTIDE SEQUENCE [LARGE SCALE GENOMIC DNA]</scope>
    <source>
        <strain>UCBPP-PA14</strain>
    </source>
</reference>
<protein>
    <recommendedName>
        <fullName evidence="1">Bifunctional uridylyltransferase/uridylyl-removing enzyme</fullName>
        <shortName evidence="1">UTase/UR</shortName>
    </recommendedName>
    <alternativeName>
        <fullName evidence="1">Bifunctional [protein-PII] modification enzyme</fullName>
    </alternativeName>
    <alternativeName>
        <fullName evidence="1">Bifunctional nitrogen sensor protein</fullName>
    </alternativeName>
    <domain>
        <recommendedName>
            <fullName evidence="1">[Protein-PII] uridylyltransferase</fullName>
            <shortName evidence="1">PII uridylyltransferase</shortName>
            <shortName evidence="1">UTase</shortName>
            <ecNumber evidence="1">2.7.7.59</ecNumber>
        </recommendedName>
    </domain>
    <domain>
        <recommendedName>
            <fullName evidence="1">[Protein-PII]-UMP uridylyl-removing enzyme</fullName>
            <shortName evidence="1">UR</shortName>
            <ecNumber evidence="1">3.1.4.-</ecNumber>
        </recommendedName>
    </domain>
</protein>
<feature type="chain" id="PRO_1000022350" description="Bifunctional uridylyltransferase/uridylyl-removing enzyme">
    <location>
        <begin position="1"/>
        <end position="900"/>
    </location>
</feature>
<feature type="domain" description="HD" evidence="2">
    <location>
        <begin position="461"/>
        <end position="583"/>
    </location>
</feature>
<feature type="domain" description="ACT 1" evidence="1">
    <location>
        <begin position="706"/>
        <end position="789"/>
    </location>
</feature>
<feature type="domain" description="ACT 2" evidence="1">
    <location>
        <begin position="816"/>
        <end position="891"/>
    </location>
</feature>
<feature type="region of interest" description="Uridylyltransferase">
    <location>
        <begin position="1"/>
        <end position="342"/>
    </location>
</feature>
<feature type="region of interest" description="Uridylyl-removing">
    <location>
        <begin position="343"/>
        <end position="705"/>
    </location>
</feature>
<sequence>MPQVDPELFDRGQFQAELALKSSPIAAFKKAIRQFREVLDNRFNSGRDIRRLIEDRAWCVDQILQQAWQRFDWGDDADITLVAVGGYGRGELHPYSDVDLLILLDSEDQESFREPIEGFLTLLWDIGLEVGQSVRSVQQCAEEARADLTVITTLMECRTICGPDSLRQRMLQVTGSAHMWPSKEFFLAKRHEQQRRHAKYNDTEYNLEPNVKGSPGGLRDIQTILWMARRQFGSLNLHALVREGFLVESECSMLASSQEFLWRVRYALHMLAGRAEDRLLFDHQRSIARLFGYEDNDVKLAVERFMQKYYRVVMAISELNDLIIQHFEEVILPCEQPVQIQPLNSRFQLRDGYIEVTHPNVFKRTPFALLEIFVLMAQHPEIKGVRADTIRLLRDSRHLIDDEFRHDIRNTSLFIELFKSSQGIHRNLRRMNRYGILGRYLPEFGHIIGQMQHDLFHIYTVDAHTLNLIKHLRKLNRPEMAEKYPLASKIIDRLPKPELIYIAGLYHDIAKGRGGDHSELGAVDAEAFCQSHQLPPWDTQLVSWLVQNHLVMSTTAQRKDLSDPQVIFDFAQLVGDQTHLDYLYVLTVADINATNPTLWNSWRASLLRQLYTETKRALRRGLENPVDREEQIRQTQTAALDQLVRNGIDQDDAEQLWSQLGDDYFLRHTAGDVAWHTEAILQHPDDGTPLVLIKETTQREFESGSQIFIYAADQHDFFAVTVAAMDQLNLSIQDARIITSTSQFTLDTYIVLDADGDSIGNNPERIAEIREGLIDALKNPDDYPTIIQRRVPRQLKHFAFAPQVTISTDALRQVSVLEVIAPDRPGLLARIGGIFLDFDLSVQNAKIATLGERVEDVFYITDARNQPLADPDLCKRLQAALVEQLSQDNGRDTLPTRINF</sequence>
<dbReference type="EC" id="2.7.7.59" evidence="1"/>
<dbReference type="EC" id="3.1.4.-" evidence="1"/>
<dbReference type="EMBL" id="CP000438">
    <property type="protein sequence ID" value="ABJ12891.1"/>
    <property type="molecule type" value="Genomic_DNA"/>
</dbReference>
<dbReference type="RefSeq" id="WP_003138013.1">
    <property type="nucleotide sequence ID" value="NZ_CP034244.1"/>
</dbReference>
<dbReference type="SMR" id="Q02RD0"/>
<dbReference type="KEGG" id="pau:PA14_17040"/>
<dbReference type="PseudoCAP" id="PA14_17040"/>
<dbReference type="HOGENOM" id="CLU_012833_0_0_6"/>
<dbReference type="BioCyc" id="PAER208963:G1G74-1403-MONOMER"/>
<dbReference type="Proteomes" id="UP000000653">
    <property type="component" value="Chromosome"/>
</dbReference>
<dbReference type="GO" id="GO:0008773">
    <property type="term" value="F:[protein-PII] uridylyltransferase activity"/>
    <property type="evidence" value="ECO:0007669"/>
    <property type="project" value="UniProtKB-UniRule"/>
</dbReference>
<dbReference type="GO" id="GO:0008081">
    <property type="term" value="F:phosphoric diester hydrolase activity"/>
    <property type="evidence" value="ECO:0007669"/>
    <property type="project" value="UniProtKB-UniRule"/>
</dbReference>
<dbReference type="GO" id="GO:0006808">
    <property type="term" value="P:regulation of nitrogen utilization"/>
    <property type="evidence" value="ECO:0007669"/>
    <property type="project" value="UniProtKB-UniRule"/>
</dbReference>
<dbReference type="CDD" id="cd04899">
    <property type="entry name" value="ACT_ACR-UUR-like_2"/>
    <property type="match status" value="1"/>
</dbReference>
<dbReference type="CDD" id="cd04900">
    <property type="entry name" value="ACT_UUR-like_1"/>
    <property type="match status" value="1"/>
</dbReference>
<dbReference type="CDD" id="cd00077">
    <property type="entry name" value="HDc"/>
    <property type="match status" value="1"/>
</dbReference>
<dbReference type="CDD" id="cd05401">
    <property type="entry name" value="NT_GlnE_GlnD_like"/>
    <property type="match status" value="1"/>
</dbReference>
<dbReference type="FunFam" id="1.10.3090.10:FF:000005">
    <property type="entry name" value="Bifunctional uridylyltransferase/uridylyl-removing enzyme"/>
    <property type="match status" value="1"/>
</dbReference>
<dbReference type="Gene3D" id="3.30.460.10">
    <property type="entry name" value="Beta Polymerase, domain 2"/>
    <property type="match status" value="1"/>
</dbReference>
<dbReference type="Gene3D" id="1.10.3090.10">
    <property type="entry name" value="cca-adding enzyme, domain 2"/>
    <property type="match status" value="1"/>
</dbReference>
<dbReference type="Gene3D" id="1.20.120.330">
    <property type="entry name" value="Nucleotidyltransferases domain 2"/>
    <property type="match status" value="1"/>
</dbReference>
<dbReference type="HAMAP" id="MF_00277">
    <property type="entry name" value="PII_uridylyl_transf"/>
    <property type="match status" value="1"/>
</dbReference>
<dbReference type="InterPro" id="IPR045865">
    <property type="entry name" value="ACT-like_dom_sf"/>
</dbReference>
<dbReference type="InterPro" id="IPR002912">
    <property type="entry name" value="ACT_dom"/>
</dbReference>
<dbReference type="InterPro" id="IPR003607">
    <property type="entry name" value="HD/PDEase_dom"/>
</dbReference>
<dbReference type="InterPro" id="IPR006674">
    <property type="entry name" value="HD_domain"/>
</dbReference>
<dbReference type="InterPro" id="IPR043519">
    <property type="entry name" value="NT_sf"/>
</dbReference>
<dbReference type="InterPro" id="IPR013546">
    <property type="entry name" value="PII_UdlTrfase/GS_AdlTrfase"/>
</dbReference>
<dbReference type="InterPro" id="IPR002934">
    <property type="entry name" value="Polymerase_NTP_transf_dom"/>
</dbReference>
<dbReference type="InterPro" id="IPR010043">
    <property type="entry name" value="UTase/UR"/>
</dbReference>
<dbReference type="NCBIfam" id="NF001366">
    <property type="entry name" value="PRK00275.1"/>
    <property type="match status" value="1"/>
</dbReference>
<dbReference type="NCBIfam" id="TIGR01693">
    <property type="entry name" value="UTase_glnD"/>
    <property type="match status" value="1"/>
</dbReference>
<dbReference type="PANTHER" id="PTHR47320">
    <property type="entry name" value="BIFUNCTIONAL URIDYLYLTRANSFERASE/URIDYLYL-REMOVING ENZYME"/>
    <property type="match status" value="1"/>
</dbReference>
<dbReference type="PANTHER" id="PTHR47320:SF1">
    <property type="entry name" value="BIFUNCTIONAL URIDYLYLTRANSFERASE_URIDYLYL-REMOVING ENZYME"/>
    <property type="match status" value="1"/>
</dbReference>
<dbReference type="Pfam" id="PF01842">
    <property type="entry name" value="ACT"/>
    <property type="match status" value="1"/>
</dbReference>
<dbReference type="Pfam" id="PF08335">
    <property type="entry name" value="GlnD_UR_UTase"/>
    <property type="match status" value="1"/>
</dbReference>
<dbReference type="Pfam" id="PF01966">
    <property type="entry name" value="HD"/>
    <property type="match status" value="1"/>
</dbReference>
<dbReference type="Pfam" id="PF01909">
    <property type="entry name" value="NTP_transf_2"/>
    <property type="match status" value="1"/>
</dbReference>
<dbReference type="PIRSF" id="PIRSF006288">
    <property type="entry name" value="PII_uridyltransf"/>
    <property type="match status" value="1"/>
</dbReference>
<dbReference type="SMART" id="SM00471">
    <property type="entry name" value="HDc"/>
    <property type="match status" value="1"/>
</dbReference>
<dbReference type="SUPFAM" id="SSF55021">
    <property type="entry name" value="ACT-like"/>
    <property type="match status" value="1"/>
</dbReference>
<dbReference type="SUPFAM" id="SSF109604">
    <property type="entry name" value="HD-domain/PDEase-like"/>
    <property type="match status" value="1"/>
</dbReference>
<dbReference type="SUPFAM" id="SSF81301">
    <property type="entry name" value="Nucleotidyltransferase"/>
    <property type="match status" value="1"/>
</dbReference>
<dbReference type="SUPFAM" id="SSF81593">
    <property type="entry name" value="Nucleotidyltransferase substrate binding subunit/domain"/>
    <property type="match status" value="1"/>
</dbReference>
<dbReference type="PROSITE" id="PS51671">
    <property type="entry name" value="ACT"/>
    <property type="match status" value="2"/>
</dbReference>
<dbReference type="PROSITE" id="PS51831">
    <property type="entry name" value="HD"/>
    <property type="match status" value="1"/>
</dbReference>
<keyword id="KW-0378">Hydrolase</keyword>
<keyword id="KW-0460">Magnesium</keyword>
<keyword id="KW-0511">Multifunctional enzyme</keyword>
<keyword id="KW-0548">Nucleotidyltransferase</keyword>
<keyword id="KW-0677">Repeat</keyword>
<keyword id="KW-0808">Transferase</keyword>
<name>GLND_PSEAB</name>
<evidence type="ECO:0000255" key="1">
    <source>
        <dbReference type="HAMAP-Rule" id="MF_00277"/>
    </source>
</evidence>
<evidence type="ECO:0000255" key="2">
    <source>
        <dbReference type="PROSITE-ProRule" id="PRU01175"/>
    </source>
</evidence>
<comment type="function">
    <text evidence="1">Modifies, by uridylylation and deuridylylation, the PII regulatory proteins (GlnB and homologs), in response to the nitrogen status of the cell that GlnD senses through the glutamine level. Under low glutamine levels, catalyzes the conversion of the PII proteins and UTP to PII-UMP and PPi, while under higher glutamine levels, GlnD hydrolyzes PII-UMP to PII and UMP (deuridylylation). Thus, controls uridylylation state and activity of the PII proteins, and plays an important role in the regulation of nitrogen assimilation and metabolism.</text>
</comment>
<comment type="catalytic activity">
    <reaction evidence="1">
        <text>[protein-PII]-L-tyrosine + UTP = [protein-PII]-uridylyl-L-tyrosine + diphosphate</text>
        <dbReference type="Rhea" id="RHEA:13673"/>
        <dbReference type="Rhea" id="RHEA-COMP:12147"/>
        <dbReference type="Rhea" id="RHEA-COMP:12148"/>
        <dbReference type="ChEBI" id="CHEBI:33019"/>
        <dbReference type="ChEBI" id="CHEBI:46398"/>
        <dbReference type="ChEBI" id="CHEBI:46858"/>
        <dbReference type="ChEBI" id="CHEBI:90602"/>
        <dbReference type="EC" id="2.7.7.59"/>
    </reaction>
</comment>
<comment type="catalytic activity">
    <reaction evidence="1">
        <text>[protein-PII]-uridylyl-L-tyrosine + H2O = [protein-PII]-L-tyrosine + UMP + H(+)</text>
        <dbReference type="Rhea" id="RHEA:48600"/>
        <dbReference type="Rhea" id="RHEA-COMP:12147"/>
        <dbReference type="Rhea" id="RHEA-COMP:12148"/>
        <dbReference type="ChEBI" id="CHEBI:15377"/>
        <dbReference type="ChEBI" id="CHEBI:15378"/>
        <dbReference type="ChEBI" id="CHEBI:46858"/>
        <dbReference type="ChEBI" id="CHEBI:57865"/>
        <dbReference type="ChEBI" id="CHEBI:90602"/>
    </reaction>
</comment>
<comment type="cofactor">
    <cofactor evidence="1">
        <name>Mg(2+)</name>
        <dbReference type="ChEBI" id="CHEBI:18420"/>
    </cofactor>
</comment>
<comment type="activity regulation">
    <text evidence="1">Uridylyltransferase (UTase) activity is inhibited by glutamine, while glutamine activates uridylyl-removing (UR) activity.</text>
</comment>
<comment type="domain">
    <text evidence="1">Has four distinct domains: an N-terminal nucleotidyltransferase (NT) domain responsible for UTase activity, a central HD domain that encodes UR activity, and two C-terminal ACT domains that seem to have a role in glutamine sensing.</text>
</comment>
<comment type="similarity">
    <text evidence="1">Belongs to the GlnD family.</text>
</comment>
<organism>
    <name type="scientific">Pseudomonas aeruginosa (strain UCBPP-PA14)</name>
    <dbReference type="NCBI Taxonomy" id="208963"/>
    <lineage>
        <taxon>Bacteria</taxon>
        <taxon>Pseudomonadati</taxon>
        <taxon>Pseudomonadota</taxon>
        <taxon>Gammaproteobacteria</taxon>
        <taxon>Pseudomonadales</taxon>
        <taxon>Pseudomonadaceae</taxon>
        <taxon>Pseudomonas</taxon>
    </lineage>
</organism>
<accession>Q02RD0</accession>